<keyword id="KW-0028">Amino-acid biosynthesis</keyword>
<keyword id="KW-0055">Arginine biosynthesis</keyword>
<keyword id="KW-0067">ATP-binding</keyword>
<keyword id="KW-0963">Cytoplasm</keyword>
<keyword id="KW-0418">Kinase</keyword>
<keyword id="KW-0547">Nucleotide-binding</keyword>
<keyword id="KW-1185">Reference proteome</keyword>
<keyword id="KW-0808">Transferase</keyword>
<sequence length="284" mass="30888">MKKKIQIVQTLLDALPFIKKFRDEIFVIKYGGSAQTDQKLKEKFAQDILLLYTVGIKPVIVHGGGKRITEILNRLKIDTTFIDGQRVTTADVMEIVEMVLSGDINKEIVSLLNNHGAKAIGVSGKDAHFITARPKDFEKFGYTGVIDHIDPSVIHNLLQEQFVPVIAPIAASNQLGHPGYNINADLCASKVAGALKAKKIIFLTDTPGVLDKEGKLISTLTEEKIELLKKDGTISGGMIPKVDACLEAIDEGVEKAHIIDGRVEHSLLLEIFTSEGIGTQVLGG</sequence>
<protein>
    <recommendedName>
        <fullName evidence="1">Acetylglutamate kinase</fullName>
        <ecNumber evidence="1">2.7.2.8</ecNumber>
    </recommendedName>
    <alternativeName>
        <fullName evidence="1">N-acetyl-L-glutamate 5-phosphotransferase</fullName>
    </alternativeName>
    <alternativeName>
        <fullName evidence="1">NAG kinase</fullName>
        <shortName evidence="1">NAGK</shortName>
    </alternativeName>
</protein>
<proteinExistence type="inferred from homology"/>
<feature type="chain" id="PRO_1000010519" description="Acetylglutamate kinase">
    <location>
        <begin position="1"/>
        <end position="284"/>
    </location>
</feature>
<feature type="binding site" evidence="1">
    <location>
        <begin position="64"/>
        <end position="65"/>
    </location>
    <ligand>
        <name>substrate</name>
    </ligand>
</feature>
<feature type="binding site" evidence="1">
    <location>
        <position position="86"/>
    </location>
    <ligand>
        <name>substrate</name>
    </ligand>
</feature>
<feature type="binding site" evidence="1">
    <location>
        <position position="181"/>
    </location>
    <ligand>
        <name>substrate</name>
    </ligand>
</feature>
<feature type="site" description="Transition state stabilizer" evidence="1">
    <location>
        <position position="29"/>
    </location>
</feature>
<feature type="site" description="Transition state stabilizer" evidence="1">
    <location>
        <position position="241"/>
    </location>
</feature>
<organism>
    <name type="scientific">Nitratiruptor sp. (strain SB155-2)</name>
    <dbReference type="NCBI Taxonomy" id="387092"/>
    <lineage>
        <taxon>Bacteria</taxon>
        <taxon>Pseudomonadati</taxon>
        <taxon>Campylobacterota</taxon>
        <taxon>Epsilonproteobacteria</taxon>
        <taxon>Nautiliales</taxon>
        <taxon>Nitratiruptoraceae</taxon>
        <taxon>Nitratiruptor</taxon>
    </lineage>
</organism>
<accession>A6Q3U3</accession>
<reference key="1">
    <citation type="journal article" date="2007" name="Proc. Natl. Acad. Sci. U.S.A.">
        <title>Deep-sea vent epsilon-proteobacterial genomes provide insights into emergence of pathogens.</title>
        <authorList>
            <person name="Nakagawa S."/>
            <person name="Takaki Y."/>
            <person name="Shimamura S."/>
            <person name="Reysenbach A.-L."/>
            <person name="Takai K."/>
            <person name="Horikoshi K."/>
        </authorList>
    </citation>
    <scope>NUCLEOTIDE SEQUENCE [LARGE SCALE GENOMIC DNA]</scope>
    <source>
        <strain>SB155-2</strain>
    </source>
</reference>
<gene>
    <name evidence="1" type="primary">argB</name>
    <name type="ordered locus">NIS_1042</name>
</gene>
<evidence type="ECO:0000255" key="1">
    <source>
        <dbReference type="HAMAP-Rule" id="MF_00082"/>
    </source>
</evidence>
<name>ARGB_NITSB</name>
<dbReference type="EC" id="2.7.2.8" evidence="1"/>
<dbReference type="EMBL" id="AP009178">
    <property type="protein sequence ID" value="BAF70152.1"/>
    <property type="molecule type" value="Genomic_DNA"/>
</dbReference>
<dbReference type="RefSeq" id="WP_012082415.1">
    <property type="nucleotide sequence ID" value="NC_009662.1"/>
</dbReference>
<dbReference type="SMR" id="A6Q3U3"/>
<dbReference type="FunCoup" id="A6Q3U3">
    <property type="interactions" value="125"/>
</dbReference>
<dbReference type="STRING" id="387092.NIS_1042"/>
<dbReference type="KEGG" id="nis:NIS_1042"/>
<dbReference type="eggNOG" id="COG0548">
    <property type="taxonomic scope" value="Bacteria"/>
</dbReference>
<dbReference type="HOGENOM" id="CLU_053680_0_0_7"/>
<dbReference type="InParanoid" id="A6Q3U3"/>
<dbReference type="OrthoDB" id="9803155at2"/>
<dbReference type="UniPathway" id="UPA00068">
    <property type="reaction ID" value="UER00107"/>
</dbReference>
<dbReference type="Proteomes" id="UP000001118">
    <property type="component" value="Chromosome"/>
</dbReference>
<dbReference type="GO" id="GO:0005737">
    <property type="term" value="C:cytoplasm"/>
    <property type="evidence" value="ECO:0007669"/>
    <property type="project" value="UniProtKB-SubCell"/>
</dbReference>
<dbReference type="GO" id="GO:0003991">
    <property type="term" value="F:acetylglutamate kinase activity"/>
    <property type="evidence" value="ECO:0007669"/>
    <property type="project" value="UniProtKB-UniRule"/>
</dbReference>
<dbReference type="GO" id="GO:0005524">
    <property type="term" value="F:ATP binding"/>
    <property type="evidence" value="ECO:0007669"/>
    <property type="project" value="UniProtKB-UniRule"/>
</dbReference>
<dbReference type="GO" id="GO:0042450">
    <property type="term" value="P:arginine biosynthetic process via ornithine"/>
    <property type="evidence" value="ECO:0007669"/>
    <property type="project" value="UniProtKB-UniRule"/>
</dbReference>
<dbReference type="GO" id="GO:0006526">
    <property type="term" value="P:L-arginine biosynthetic process"/>
    <property type="evidence" value="ECO:0007669"/>
    <property type="project" value="UniProtKB-UniPathway"/>
</dbReference>
<dbReference type="CDD" id="cd04250">
    <property type="entry name" value="AAK_NAGK-C"/>
    <property type="match status" value="1"/>
</dbReference>
<dbReference type="FunFam" id="3.40.1160.10:FF:000004">
    <property type="entry name" value="Acetylglutamate kinase"/>
    <property type="match status" value="1"/>
</dbReference>
<dbReference type="Gene3D" id="3.40.1160.10">
    <property type="entry name" value="Acetylglutamate kinase-like"/>
    <property type="match status" value="1"/>
</dbReference>
<dbReference type="HAMAP" id="MF_00082">
    <property type="entry name" value="ArgB"/>
    <property type="match status" value="1"/>
</dbReference>
<dbReference type="InterPro" id="IPR036393">
    <property type="entry name" value="AceGlu_kinase-like_sf"/>
</dbReference>
<dbReference type="InterPro" id="IPR004662">
    <property type="entry name" value="AcgluKinase_fam"/>
</dbReference>
<dbReference type="InterPro" id="IPR037528">
    <property type="entry name" value="ArgB"/>
</dbReference>
<dbReference type="InterPro" id="IPR001048">
    <property type="entry name" value="Asp/Glu/Uridylate_kinase"/>
</dbReference>
<dbReference type="InterPro" id="IPR001057">
    <property type="entry name" value="Glu/AcGlu_kinase"/>
</dbReference>
<dbReference type="InterPro" id="IPR041727">
    <property type="entry name" value="NAGK-C"/>
</dbReference>
<dbReference type="NCBIfam" id="TIGR00761">
    <property type="entry name" value="argB"/>
    <property type="match status" value="1"/>
</dbReference>
<dbReference type="PANTHER" id="PTHR23342">
    <property type="entry name" value="N-ACETYLGLUTAMATE SYNTHASE"/>
    <property type="match status" value="1"/>
</dbReference>
<dbReference type="PANTHER" id="PTHR23342:SF0">
    <property type="entry name" value="N-ACETYLGLUTAMATE SYNTHASE, MITOCHONDRIAL"/>
    <property type="match status" value="1"/>
</dbReference>
<dbReference type="Pfam" id="PF00696">
    <property type="entry name" value="AA_kinase"/>
    <property type="match status" value="1"/>
</dbReference>
<dbReference type="PIRSF" id="PIRSF000728">
    <property type="entry name" value="NAGK"/>
    <property type="match status" value="1"/>
</dbReference>
<dbReference type="PRINTS" id="PR00474">
    <property type="entry name" value="GLU5KINASE"/>
</dbReference>
<dbReference type="SUPFAM" id="SSF53633">
    <property type="entry name" value="Carbamate kinase-like"/>
    <property type="match status" value="1"/>
</dbReference>
<comment type="function">
    <text evidence="1">Catalyzes the ATP-dependent phosphorylation of N-acetyl-L-glutamate.</text>
</comment>
<comment type="catalytic activity">
    <reaction evidence="1">
        <text>N-acetyl-L-glutamate + ATP = N-acetyl-L-glutamyl 5-phosphate + ADP</text>
        <dbReference type="Rhea" id="RHEA:14629"/>
        <dbReference type="ChEBI" id="CHEBI:30616"/>
        <dbReference type="ChEBI" id="CHEBI:44337"/>
        <dbReference type="ChEBI" id="CHEBI:57936"/>
        <dbReference type="ChEBI" id="CHEBI:456216"/>
        <dbReference type="EC" id="2.7.2.8"/>
    </reaction>
</comment>
<comment type="pathway">
    <text evidence="1">Amino-acid biosynthesis; L-arginine biosynthesis; N(2)-acetyl-L-ornithine from L-glutamate: step 2/4.</text>
</comment>
<comment type="subcellular location">
    <subcellularLocation>
        <location evidence="1">Cytoplasm</location>
    </subcellularLocation>
</comment>
<comment type="similarity">
    <text evidence="1">Belongs to the acetylglutamate kinase family. ArgB subfamily.</text>
</comment>